<geneLocation type="chloroplast"/>
<protein>
    <recommendedName>
        <fullName evidence="1">Photosystem II reaction center protein Z</fullName>
        <shortName evidence="1">PSII-Z</shortName>
    </recommendedName>
</protein>
<reference key="1">
    <citation type="journal article" date="2005" name="Am. J. Bot.">
        <title>The tortoise and the hare II: relative utility of 21 noncoding chloroplast DNA sequences for phylogenetic analysis.</title>
        <authorList>
            <person name="Shaw J."/>
            <person name="Lickey E.B."/>
            <person name="Beck J.T."/>
            <person name="Farmer S.B."/>
            <person name="Liu W."/>
            <person name="Miller J."/>
            <person name="Siripun K.C."/>
            <person name="Winder C.T."/>
            <person name="Schilling E.E."/>
            <person name="Small R.L."/>
        </authorList>
        <dbReference type="AGRICOLA" id="IND43689705"/>
    </citation>
    <scope>NUCLEOTIDE SEQUENCE [GENOMIC DNA]</scope>
</reference>
<reference key="2">
    <citation type="journal article" date="2008" name="BMC Plant Biol.">
        <title>Complete nucleotide sequence of the Cryptomeria japonica D. Don. chloroplast genome and comparative chloroplast genomics: diversified genomic structure of coniferous species.</title>
        <authorList>
            <person name="Hirao T."/>
            <person name="Watanabe A."/>
            <person name="Kurita M."/>
            <person name="Kondo T."/>
            <person name="Takata K."/>
        </authorList>
    </citation>
    <scope>NUCLEOTIDE SEQUENCE [LARGE SCALE GENOMIC DNA]</scope>
</reference>
<comment type="function">
    <text evidence="1">May control the interaction of photosystem II (PSII) cores with the light-harvesting antenna, regulates electron flow through the 2 photosystem reaction centers. PSII is a light-driven water plastoquinone oxidoreductase, using light energy to abstract electrons from H(2)O, generating a proton gradient subsequently used for ATP formation.</text>
</comment>
<comment type="subunit">
    <text evidence="1">PSII is composed of 1 copy each of membrane proteins PsbA, PsbB, PsbC, PsbD, PsbE, PsbF, PsbH, PsbI, PsbJ, PsbK, PsbL, PsbM, PsbT, PsbY, PsbZ, Psb30/Ycf12, at least 3 peripheral proteins of the oxygen-evolving complex and a large number of cofactors. It forms dimeric complexes.</text>
</comment>
<comment type="subcellular location">
    <subcellularLocation>
        <location evidence="1">Plastid</location>
        <location evidence="1">Chloroplast thylakoid membrane</location>
        <topology evidence="1">Multi-pass membrane protein</topology>
    </subcellularLocation>
</comment>
<comment type="similarity">
    <text evidence="1">Belongs to the PsbZ family.</text>
</comment>
<accession>Q5IHA3</accession>
<accession>B1VKG8</accession>
<organism>
    <name type="scientific">Cryptomeria japonica</name>
    <name type="common">Japanese cedar</name>
    <name type="synonym">Cupressus japonica</name>
    <dbReference type="NCBI Taxonomy" id="3369"/>
    <lineage>
        <taxon>Eukaryota</taxon>
        <taxon>Viridiplantae</taxon>
        <taxon>Streptophyta</taxon>
        <taxon>Embryophyta</taxon>
        <taxon>Tracheophyta</taxon>
        <taxon>Spermatophyta</taxon>
        <taxon>Pinopsida</taxon>
        <taxon>Pinidae</taxon>
        <taxon>Conifers II</taxon>
        <taxon>Cupressales</taxon>
        <taxon>Cupressaceae</taxon>
        <taxon>Cryptomeria</taxon>
    </lineage>
</organism>
<feature type="chain" id="PRO_0000217694" description="Photosystem II reaction center protein Z">
    <location>
        <begin position="1"/>
        <end position="62"/>
    </location>
</feature>
<feature type="transmembrane region" description="Helical" evidence="1">
    <location>
        <begin position="8"/>
        <end position="28"/>
    </location>
</feature>
<feature type="transmembrane region" description="Helical" evidence="1">
    <location>
        <begin position="41"/>
        <end position="61"/>
    </location>
</feature>
<gene>
    <name evidence="1" type="primary">psbZ</name>
</gene>
<name>PSBZ_CRYJA</name>
<proteinExistence type="inferred from homology"/>
<dbReference type="EMBL" id="AY727491">
    <property type="protein sequence ID" value="AAW56540.1"/>
    <property type="molecule type" value="Genomic_DNA"/>
</dbReference>
<dbReference type="EMBL" id="AP009377">
    <property type="protein sequence ID" value="BAG16679.1"/>
    <property type="molecule type" value="Genomic_DNA"/>
</dbReference>
<dbReference type="RefSeq" id="YP_001806681.1">
    <property type="nucleotide sequence ID" value="NC_010548.1"/>
</dbReference>
<dbReference type="SMR" id="Q5IHA3"/>
<dbReference type="GeneID" id="6166565"/>
<dbReference type="KEGG" id="cjf:6166565"/>
<dbReference type="OrthoDB" id="769790at2759"/>
<dbReference type="GO" id="GO:0009535">
    <property type="term" value="C:chloroplast thylakoid membrane"/>
    <property type="evidence" value="ECO:0007669"/>
    <property type="project" value="UniProtKB-SubCell"/>
</dbReference>
<dbReference type="GO" id="GO:0009539">
    <property type="term" value="C:photosystem II reaction center"/>
    <property type="evidence" value="ECO:0007669"/>
    <property type="project" value="InterPro"/>
</dbReference>
<dbReference type="GO" id="GO:0015979">
    <property type="term" value="P:photosynthesis"/>
    <property type="evidence" value="ECO:0007669"/>
    <property type="project" value="UniProtKB-UniRule"/>
</dbReference>
<dbReference type="GO" id="GO:0042549">
    <property type="term" value="P:photosystem II stabilization"/>
    <property type="evidence" value="ECO:0007669"/>
    <property type="project" value="InterPro"/>
</dbReference>
<dbReference type="Gene3D" id="1.10.287.740">
    <property type="entry name" value="Photosystem II PsbZ, reaction centre"/>
    <property type="match status" value="1"/>
</dbReference>
<dbReference type="HAMAP" id="MF_00644">
    <property type="entry name" value="PSII_PsbZ"/>
    <property type="match status" value="1"/>
</dbReference>
<dbReference type="InterPro" id="IPR002644">
    <property type="entry name" value="PSII_PsbZ"/>
</dbReference>
<dbReference type="InterPro" id="IPR036512">
    <property type="entry name" value="PSII_PsbZ_sf"/>
</dbReference>
<dbReference type="NCBIfam" id="TIGR03043">
    <property type="entry name" value="PS_II_psbZ"/>
    <property type="match status" value="1"/>
</dbReference>
<dbReference type="PANTHER" id="PTHR34971">
    <property type="entry name" value="PHOTOSYSTEM II REACTION CENTER PROTEIN Z"/>
    <property type="match status" value="1"/>
</dbReference>
<dbReference type="PANTHER" id="PTHR34971:SF2">
    <property type="entry name" value="PHOTOSYSTEM II REACTION CENTER PROTEIN Z"/>
    <property type="match status" value="1"/>
</dbReference>
<dbReference type="Pfam" id="PF01737">
    <property type="entry name" value="Ycf9"/>
    <property type="match status" value="1"/>
</dbReference>
<dbReference type="SUPFAM" id="SSF161055">
    <property type="entry name" value="PsbZ-like"/>
    <property type="match status" value="1"/>
</dbReference>
<sequence length="62" mass="6456">MTIAFQSSVFALIAISTLLVIGVPVALASPNGWSSNKNVLFSGVSLWIGSVFLVGILNSFIS</sequence>
<keyword id="KW-0150">Chloroplast</keyword>
<keyword id="KW-0472">Membrane</keyword>
<keyword id="KW-0602">Photosynthesis</keyword>
<keyword id="KW-0604">Photosystem II</keyword>
<keyword id="KW-0934">Plastid</keyword>
<keyword id="KW-0674">Reaction center</keyword>
<keyword id="KW-0793">Thylakoid</keyword>
<keyword id="KW-0812">Transmembrane</keyword>
<keyword id="KW-1133">Transmembrane helix</keyword>
<evidence type="ECO:0000255" key="1">
    <source>
        <dbReference type="HAMAP-Rule" id="MF_00644"/>
    </source>
</evidence>